<keyword id="KW-1015">Disulfide bond</keyword>
<keyword id="KW-1170">Fusion of virus membrane with host endosomal membrane</keyword>
<keyword id="KW-1168">Fusion of virus membrane with host membrane</keyword>
<keyword id="KW-0325">Glycoprotein</keyword>
<keyword id="KW-1032">Host cell membrane</keyword>
<keyword id="KW-1038">Host endoplasmic reticulum</keyword>
<keyword id="KW-1040">Host Golgi apparatus</keyword>
<keyword id="KW-1043">Host membrane</keyword>
<keyword id="KW-0945">Host-virus interaction</keyword>
<keyword id="KW-0449">Lipoprotein</keyword>
<keyword id="KW-0472">Membrane</keyword>
<keyword id="KW-0479">Metal-binding</keyword>
<keyword id="KW-0519">Myristate</keyword>
<keyword id="KW-1185">Reference proteome</keyword>
<keyword id="KW-0812">Transmembrane</keyword>
<keyword id="KW-1133">Transmembrane helix</keyword>
<keyword id="KW-1161">Viral attachment to host cell</keyword>
<keyword id="KW-0261">Viral envelope protein</keyword>
<keyword id="KW-1162">Viral penetration into host cytoplasm</keyword>
<keyword id="KW-0946">Virion</keyword>
<keyword id="KW-1164">Virus endocytosis by host</keyword>
<keyword id="KW-1160">Virus entry into host cell</keyword>
<keyword id="KW-0862">Zinc</keyword>
<evidence type="ECO:0000250" key="1">
    <source>
        <dbReference type="UniProtKB" id="P26313"/>
    </source>
</evidence>
<evidence type="ECO:0000255" key="2">
    <source>
        <dbReference type="HAMAP-Rule" id="MF_04084"/>
    </source>
</evidence>
<evidence type="ECO:0000269" key="3">
    <source>
    </source>
</evidence>
<feature type="initiator methionine" description="Removed; by host" evidence="2">
    <location>
        <position position="1"/>
    </location>
</feature>
<feature type="chain" id="PRO_0000361608" description="Pre-glycoprotein polyprotein GP complex" evidence="2">
    <location>
        <begin position="2"/>
        <end position="518"/>
    </location>
</feature>
<feature type="chain" id="PRO_0000361609" description="Stable signal peptide" evidence="2">
    <location>
        <begin position="2"/>
        <end position="58"/>
    </location>
</feature>
<feature type="chain" id="PRO_0000361610" description="Glycoprotein G1" evidence="2">
    <location>
        <begin position="59"/>
        <end position="283"/>
    </location>
</feature>
<feature type="chain" id="PRO_0000361611" description="Glycoprotein G2" evidence="2">
    <location>
        <begin position="284"/>
        <end position="518"/>
    </location>
</feature>
<feature type="topological domain" description="Extracellular" evidence="2">
    <location>
        <begin position="2"/>
        <end position="17"/>
    </location>
</feature>
<feature type="transmembrane region" description="Helical" evidence="2">
    <location>
        <begin position="18"/>
        <end position="33"/>
    </location>
</feature>
<feature type="topological domain" description="Cytoplasmic" evidence="2">
    <location>
        <begin position="34"/>
        <end position="58"/>
    </location>
</feature>
<feature type="topological domain" description="Extracellular" evidence="2">
    <location>
        <begin position="59"/>
        <end position="456"/>
    </location>
</feature>
<feature type="transmembrane region" description="Helical" evidence="2">
    <location>
        <begin position="457"/>
        <end position="477"/>
    </location>
</feature>
<feature type="topological domain" description="Cytoplasmic" evidence="2">
    <location>
        <begin position="478"/>
        <end position="518"/>
    </location>
</feature>
<feature type="binding site" evidence="2">
    <location>
        <position position="57"/>
    </location>
    <ligand>
        <name>Zn(2+)</name>
        <dbReference type="ChEBI" id="CHEBI:29105"/>
        <label>1</label>
    </ligand>
</feature>
<feature type="binding site" evidence="2">
    <location>
        <position position="479"/>
    </location>
    <ligand>
        <name>Zn(2+)</name>
        <dbReference type="ChEBI" id="CHEBI:29105"/>
        <label>2</label>
    </ligand>
</feature>
<feature type="binding site" evidence="2">
    <location>
        <position position="481"/>
    </location>
    <ligand>
        <name>Zn(2+)</name>
        <dbReference type="ChEBI" id="CHEBI:29105"/>
        <label>2</label>
    </ligand>
</feature>
<feature type="binding site" evidence="2">
    <location>
        <position position="487"/>
    </location>
    <ligand>
        <name>Zn(2+)</name>
        <dbReference type="ChEBI" id="CHEBI:29105"/>
        <label>2</label>
    </ligand>
</feature>
<feature type="binding site" evidence="2">
    <location>
        <position position="491"/>
    </location>
    <ligand>
        <name>Zn(2+)</name>
        <dbReference type="ChEBI" id="CHEBI:29105"/>
        <label>1</label>
    </ligand>
</feature>
<feature type="binding site" evidence="2">
    <location>
        <position position="499"/>
    </location>
    <ligand>
        <name>Zn(2+)</name>
        <dbReference type="ChEBI" id="CHEBI:29105"/>
        <label>1</label>
    </ligand>
</feature>
<feature type="binding site" evidence="2">
    <location>
        <position position="501"/>
    </location>
    <ligand>
        <name>Zn(2+)</name>
        <dbReference type="ChEBI" id="CHEBI:29105"/>
        <label>1</label>
    </ligand>
</feature>
<feature type="site" description="Important for GP-C-mediated membrane fusion" evidence="1">
    <location>
        <position position="33"/>
    </location>
</feature>
<feature type="site" description="Cleavage; by host signal peptidase" evidence="2">
    <location>
        <begin position="58"/>
        <end position="59"/>
    </location>
</feature>
<feature type="site" description="Cleavage; by host MBTPS1" evidence="2">
    <location>
        <begin position="283"/>
        <end position="284"/>
    </location>
</feature>
<feature type="lipid moiety-binding region" description="N-myristoyl glycine; by host" evidence="2">
    <location>
        <position position="2"/>
    </location>
</feature>
<feature type="glycosylation site" description="N-linked (GlcNAc...) asparagine; by host" evidence="2">
    <location>
        <position position="90"/>
    </location>
</feature>
<feature type="glycosylation site" description="N-linked (GlcNAc...) asparagine; by host" evidence="2">
    <location>
        <position position="112"/>
    </location>
</feature>
<feature type="glycosylation site" description="N-linked (GlcNAc...) asparagine; by host" evidence="2">
    <location>
        <position position="127"/>
    </location>
</feature>
<feature type="glycosylation site" description="N-linked (GlcNAc...) asparagine; by host" evidence="2">
    <location>
        <position position="180"/>
    </location>
</feature>
<feature type="glycosylation site" description="N-linked (GlcNAc...) asparagine; by host" evidence="2">
    <location>
        <position position="251"/>
    </location>
</feature>
<feature type="glycosylation site" description="N-linked (GlcNAc...) asparagine; by host" evidence="2">
    <location>
        <position position="389"/>
    </location>
</feature>
<feature type="glycosylation site" description="N-linked (GlcNAc...) asparagine; by host" evidence="2">
    <location>
        <position position="397"/>
    </location>
</feature>
<feature type="glycosylation site" description="N-linked (GlcNAc...) asparagine; by host" evidence="2">
    <location>
        <position position="414"/>
    </location>
</feature>
<feature type="glycosylation site" description="N-linked (GlcNAc...) asparagine; by host" evidence="2">
    <location>
        <position position="419"/>
    </location>
</feature>
<feature type="disulfide bond" evidence="2">
    <location>
        <begin position="87"/>
        <end position="258"/>
    </location>
</feature>
<feature type="disulfide bond" evidence="2">
    <location>
        <begin position="303"/>
        <end position="316"/>
    </location>
</feature>
<feature type="disulfide bond" evidence="2">
    <location>
        <begin position="325"/>
        <end position="334"/>
    </location>
</feature>
<feature type="disulfide bond" evidence="2">
    <location>
        <begin position="388"/>
        <end position="409"/>
    </location>
</feature>
<organismHost>
    <name type="scientific">Bolomys</name>
    <dbReference type="NCBI Taxonomy" id="10080"/>
</organismHost>
<reference key="1">
    <citation type="journal article" date="1996" name="Virology">
        <title>Oliveros virus: a novel arenavirus from Argentina.</title>
        <authorList>
            <person name="Bowen M.D."/>
            <person name="Peters C.J."/>
            <person name="Mills J.N."/>
            <person name="Nichol S.T."/>
        </authorList>
    </citation>
    <scope>NUCLEOTIDE SEQUENCE [GENOMIC RNA]</scope>
</reference>
<reference key="2">
    <citation type="journal article" date="2002" name="J. Virol.">
        <title>New World arenavirus clade C, but not clade A and B viruses, utilizes alpha-dystroglycan as its major receptor.</title>
        <authorList>
            <person name="Spiropoulou C.F."/>
            <person name="Kunz S."/>
            <person name="Rollin P.E."/>
            <person name="Campbell K.P."/>
            <person name="Oldstone M.B."/>
        </authorList>
    </citation>
    <scope>FUNCTION</scope>
    <scope>INTERACTION WITH HOST DAG1</scope>
</reference>
<name>GLYC_OLVVA</name>
<organism>
    <name type="scientific">Oliveros mammarenavirus (isolate Mouse/Argentina/RIID 3229/1990)</name>
    <name type="common">OLVV</name>
    <dbReference type="NCBI Taxonomy" id="3052322"/>
    <lineage>
        <taxon>Viruses</taxon>
        <taxon>Riboviria</taxon>
        <taxon>Orthornavirae</taxon>
        <taxon>Negarnaviricota</taxon>
        <taxon>Polyploviricotina</taxon>
        <taxon>Ellioviricetes</taxon>
        <taxon>Bunyavirales</taxon>
        <taxon>Arenaviridae</taxon>
        <taxon>Mammarenavirus</taxon>
    </lineage>
</organism>
<comment type="function">
    <molecule>Stable signal peptide</molecule>
    <text evidence="2">Functions as a cleaved signal peptide that is retained as the third component of the GP complex (GP-C). Helps to stabilize the spike complex in its native conformation. The SSP is required for efficient glycoprotein expression, post-translational maturation cleavage of G1 and G2, glycoprotein transport to the cell surface plasma membrane, formation of infectious virus particles, and acid pH-dependent glycoprotein-mediated cell fusion.</text>
</comment>
<comment type="function">
    <molecule>Glycoprotein G1</molecule>
    <text evidence="2 3">Forms the virion spikes together with glycoprotein G2. The glycoprotein spike trimers are connected to the underlying matrix. Mediates virus attachment to host receptor alpha-dystroglycan DAG1. This attachment induces virion internalization predominantly through clathrin- and caveolin-independent endocytosis (PubMed:11967329).</text>
</comment>
<comment type="function">
    <molecule>Glycoprotein G2</molecule>
    <text evidence="2">Forms the virion spikes together with glycoprotein G1. The glycoprotein spike trimers are connected to the underlying matrix. Class I viral fusion protein that directs fusion of viral and host endosomal membranes, leading to delivery of the nucleocapsid into the cytoplasm. Membrane fusion is mediated by irreversible conformational changes induced by acidification.</text>
</comment>
<comment type="subunit">
    <molecule>Stable signal peptide</molecule>
    <text evidence="2">Interacts with glycoprotein G2. Part of the GP complex (GP-C) together with glycoprotein G1 and glycoprotein G2. The GP-complex interacts with protein Z, which interacts with ribonucleocapsid; these interactions may induce virion budding.</text>
</comment>
<comment type="subunit">
    <molecule>Glycoprotein G1</molecule>
    <text evidence="2">Homotrimer; disulfide-linked. In pre-fusion state, G1 homotrimers bind G2 homotrimers via ionic interactions. Part of the GP complex (GP-C) together with glycoprotein G2 and the stable signal peptide. The GP-complex interacts with protein Z, which interacts with ribonucleocapsid; these interactions may induce virion budding.</text>
</comment>
<comment type="subunit">
    <molecule>Glycoprotein G2</molecule>
    <text evidence="2">Homotrimer. Interacts with the stable signal peptide. In pre-fusion state, G2 homotrimers bind G1 homotrimers via ionic interactions. Part of the GP complex (GP-C) together with glycoprotein G1 and the stable signal peptide. Acidification in the endosome triggers rearrangements, which ultimately leads to a 6 helix bundle formed by the two heptad repeat domains (HR1 and HR2) in post-fusion state. The GP-complex interacts with protein Z, which interacts with ribonucleocapsid; these interactions may induce virion budding.</text>
</comment>
<comment type="subcellular location">
    <molecule>Stable signal peptide</molecule>
    <subcellularLocation>
        <location evidence="2">Virion membrane</location>
        <topology evidence="2">Single-pass type II membrane protein</topology>
    </subcellularLocation>
    <subcellularLocation>
        <location evidence="2">Host endoplasmic reticulum membrane</location>
        <topology evidence="2">Single-pass type II membrane protein</topology>
    </subcellularLocation>
    <subcellularLocation>
        <location evidence="2">Host Golgi apparatus membrane</location>
        <topology evidence="2">Single-pass type II membrane protein</topology>
    </subcellularLocation>
    <subcellularLocation>
        <location evidence="2">Host cell membrane</location>
        <topology evidence="2">Single-pass type II membrane protein</topology>
    </subcellularLocation>
</comment>
<comment type="subcellular location">
    <molecule>Glycoprotein G1</molecule>
    <subcellularLocation>
        <location evidence="2">Virion membrane</location>
        <topology evidence="2">Peripheral membrane protein</topology>
    </subcellularLocation>
    <subcellularLocation>
        <location evidence="2">Host endoplasmic reticulum membrane</location>
        <topology evidence="2">Peripheral membrane protein</topology>
    </subcellularLocation>
    <subcellularLocation>
        <location evidence="2">Host Golgi apparatus membrane</location>
        <topology evidence="2">Peripheral membrane protein</topology>
    </subcellularLocation>
    <subcellularLocation>
        <location evidence="2">Host cell membrane</location>
        <topology evidence="2">Peripheral membrane protein</topology>
    </subcellularLocation>
</comment>
<comment type="subcellular location">
    <molecule>Glycoprotein G2</molecule>
    <subcellularLocation>
        <location evidence="2">Virion membrane</location>
        <topology evidence="2">Single-pass membrane protein</topology>
    </subcellularLocation>
    <subcellularLocation>
        <location evidence="2">Host endoplasmic reticulum membrane</location>
        <topology evidence="2">Single-pass membrane protein</topology>
    </subcellularLocation>
    <subcellularLocation>
        <location evidence="2">Host Golgi apparatus membrane</location>
        <topology evidence="2">Single-pass membrane protein</topology>
    </subcellularLocation>
    <subcellularLocation>
        <location evidence="2">Host cell membrane</location>
        <topology evidence="2">Single-pass membrane protein</topology>
    </subcellularLocation>
    <text evidence="2">Binding to the stable signal peptide masks endogenous ER localization signals in the cytoplasmic domain of G2 to ensure that only the fully assembled, tripartite GP complex is transported for virion assembly.</text>
</comment>
<comment type="domain">
    <molecule>Stable signal peptide</molecule>
    <text evidence="2">The N-terminus is localized at the extracellular side of the GP-C, with a part embedded in the membrane probably.</text>
</comment>
<comment type="domain">
    <molecule>Glycoprotein G2</molecule>
    <text evidence="2">Contains 1 fusion peptide at the N-terminus, 2 heptad repeats domains HR1 and HR2 and, at the C-terminus, a cytoplasmic domain that plays a role in ER location. Also contains a zinc-binding domain that allows SSP retention in the GPC complex by accepting a cysteine from SSP as the fourth ligand.</text>
</comment>
<comment type="PTM">
    <molecule>Pre-glycoprotein polyprotein GP complex</molecule>
    <text evidence="2">Specific enzymatic cleavages in vivo yield mature proteins. GP-C polyprotein is cleaved in the endoplasmic reticulum by the host protease MBTPS1. Only cleaved glycoprotein is incorporated into virions.</text>
</comment>
<comment type="PTM">
    <molecule>Stable signal peptide</molecule>
    <text evidence="2">The SSP remains stably associated with the GP complex following cleavage by signal peptidase and plays crucial roles in the trafficking of GP through the secretory pathway.</text>
</comment>
<comment type="PTM">
    <molecule>Stable signal peptide</molecule>
    <text evidence="2">Myristoylation is necessary for GP2-mediated fusion activity.</text>
</comment>
<comment type="similarity">
    <text evidence="2">Belongs to the arenaviridae GPC protein family.</text>
</comment>
<proteinExistence type="evidence at protein level"/>
<gene>
    <name evidence="2" type="primary">GPC</name>
    <name type="synonym">GP-C</name>
</gene>
<accession>Q84168</accession>
<sequence length="518" mass="59380">MGQVIGFFQSLPNIINEALNIALICVALIAILKGIVNIWKSGLIQLFIFLILAGRSCSHTFQIGRNHEFQSITLNFTQFLGYAPSSCSVNNTHHYFRGPGNVSWGIELTLTNNSVINASNSLKVFTNIHHNITNCVQNIDEQDHLMKWLIETMHLQIMKPGKRLPPILCEKDKGLLIEYNLTNIASREEKHSEYWSQLLYGLSKLLGSSKSLWFDYCQRADCMMQEHSSHLKCNYSECSGHTTFKYLILQNTTWENHCEFNHLNTIHLLMSSTGQSFITRRLQAFLTWTLSDATGNDLPGGYCLEQWAIVWAGIKCFGNTAVAKCNQNHDSEFCDMLRLFDYNRNAIKSLNDQSQSRLNLLTNTINSLISDNLLMKNKLAEIMNIPYCNYTKFWYINDTRTGRHTLPQCWLISNGSYLNETKFRTQWLSESNALYTEMLTEDYDKRQGSTPLSLVDLCFWSTLFYVTTLFAHLVGFPTHRHILDGPCPKPHRLTKKGICSCGHFGIPGKPVRWVKRSR</sequence>
<protein>
    <recommendedName>
        <fullName evidence="2">Pre-glycoprotein polyprotein GP complex</fullName>
        <shortName evidence="2">Pre-GP-C</shortName>
    </recommendedName>
    <component>
        <recommendedName>
            <fullName evidence="2">Stable signal peptide</fullName>
            <shortName evidence="2">SSP</shortName>
        </recommendedName>
    </component>
    <component>
        <recommendedName>
            <fullName evidence="2">Glycoprotein G1</fullName>
            <shortName evidence="2">GP1</shortName>
        </recommendedName>
    </component>
    <component>
        <recommendedName>
            <fullName evidence="2">Glycoprotein G2</fullName>
            <shortName evidence="2">GP2</shortName>
        </recommendedName>
    </component>
</protein>
<dbReference type="EMBL" id="U34248">
    <property type="protein sequence ID" value="AAC54654.1"/>
    <property type="molecule type" value="Genomic_RNA"/>
</dbReference>
<dbReference type="RefSeq" id="YP_001649210.1">
    <property type="nucleotide sequence ID" value="NC_010248.1"/>
</dbReference>
<dbReference type="SMR" id="Q84168"/>
<dbReference type="GlyCosmos" id="Q84168">
    <property type="glycosylation" value="13 sites, No reported glycans"/>
</dbReference>
<dbReference type="KEGG" id="vg:5848318"/>
<dbReference type="OrthoDB" id="4838at10239"/>
<dbReference type="Proteomes" id="UP000009264">
    <property type="component" value="Genome"/>
</dbReference>
<dbReference type="GO" id="GO:0044167">
    <property type="term" value="C:host cell endoplasmic reticulum membrane"/>
    <property type="evidence" value="ECO:0007669"/>
    <property type="project" value="UniProtKB-SubCell"/>
</dbReference>
<dbReference type="GO" id="GO:0044178">
    <property type="term" value="C:host cell Golgi membrane"/>
    <property type="evidence" value="ECO:0007669"/>
    <property type="project" value="UniProtKB-SubCell"/>
</dbReference>
<dbReference type="GO" id="GO:0020002">
    <property type="term" value="C:host cell plasma membrane"/>
    <property type="evidence" value="ECO:0007669"/>
    <property type="project" value="UniProtKB-SubCell"/>
</dbReference>
<dbReference type="GO" id="GO:0016020">
    <property type="term" value="C:membrane"/>
    <property type="evidence" value="ECO:0007669"/>
    <property type="project" value="UniProtKB-UniRule"/>
</dbReference>
<dbReference type="GO" id="GO:0019031">
    <property type="term" value="C:viral envelope"/>
    <property type="evidence" value="ECO:0007669"/>
    <property type="project" value="UniProtKB-UniRule"/>
</dbReference>
<dbReference type="GO" id="GO:0055036">
    <property type="term" value="C:virion membrane"/>
    <property type="evidence" value="ECO:0007669"/>
    <property type="project" value="UniProtKB-SubCell"/>
</dbReference>
<dbReference type="GO" id="GO:0046872">
    <property type="term" value="F:metal ion binding"/>
    <property type="evidence" value="ECO:0007669"/>
    <property type="project" value="UniProtKB-KW"/>
</dbReference>
<dbReference type="GO" id="GO:0039654">
    <property type="term" value="P:fusion of virus membrane with host endosome membrane"/>
    <property type="evidence" value="ECO:0007669"/>
    <property type="project" value="UniProtKB-UniRule"/>
</dbReference>
<dbReference type="GO" id="GO:0019065">
    <property type="term" value="P:receptor-mediated endocytosis of virus by host cell"/>
    <property type="evidence" value="ECO:0007669"/>
    <property type="project" value="UniProtKB-UniRule"/>
</dbReference>
<dbReference type="GO" id="GO:0019062">
    <property type="term" value="P:virion attachment to host cell"/>
    <property type="evidence" value="ECO:0007669"/>
    <property type="project" value="UniProtKB-UniRule"/>
</dbReference>
<dbReference type="Gene3D" id="6.10.140.1590">
    <property type="match status" value="1"/>
</dbReference>
<dbReference type="Gene3D" id="2.20.28.180">
    <property type="entry name" value="Arenavirus glycoprotein, zinc binding domain"/>
    <property type="match status" value="1"/>
</dbReference>
<dbReference type="HAMAP" id="MF_04084">
    <property type="entry name" value="ARENA_GPC"/>
    <property type="match status" value="1"/>
</dbReference>
<dbReference type="InterPro" id="IPR001535">
    <property type="entry name" value="Arena_glycoprot"/>
</dbReference>
<dbReference type="InterPro" id="IPR043015">
    <property type="entry name" value="Arena_glycoprot_zinc-bd"/>
</dbReference>
<dbReference type="Pfam" id="PF00798">
    <property type="entry name" value="Arena_glycoprot"/>
    <property type="match status" value="1"/>
</dbReference>
<dbReference type="PIRSF" id="PIRSF004028">
    <property type="entry name" value="GPC_ArenaV"/>
    <property type="match status" value="1"/>
</dbReference>